<comment type="function">
    <text evidence="1">Involved in the biosynthesis of branched-chain amino acids (BCAA). Catalyzes an alkyl-migration followed by a ketol-acid reduction of (S)-2-acetolactate (S2AL) to yield (R)-2,3-dihydroxy-isovalerate. In the isomerase reaction, S2AL is rearranged via a Mg-dependent methyl migration to produce 3-hydroxy-3-methyl-2-ketobutyrate (HMKB). In the reductase reaction, this 2-ketoacid undergoes a metal-dependent reduction by NADPH to yield (R)-2,3-dihydroxy-isovalerate.</text>
</comment>
<comment type="catalytic activity">
    <reaction evidence="1">
        <text>(2R)-2,3-dihydroxy-3-methylbutanoate + NADP(+) = (2S)-2-acetolactate + NADPH + H(+)</text>
        <dbReference type="Rhea" id="RHEA:22068"/>
        <dbReference type="ChEBI" id="CHEBI:15378"/>
        <dbReference type="ChEBI" id="CHEBI:49072"/>
        <dbReference type="ChEBI" id="CHEBI:57783"/>
        <dbReference type="ChEBI" id="CHEBI:58349"/>
        <dbReference type="ChEBI" id="CHEBI:58476"/>
        <dbReference type="EC" id="1.1.1.86"/>
    </reaction>
</comment>
<comment type="catalytic activity">
    <reaction evidence="1">
        <text>(2R,3R)-2,3-dihydroxy-3-methylpentanoate + NADP(+) = (S)-2-ethyl-2-hydroxy-3-oxobutanoate + NADPH + H(+)</text>
        <dbReference type="Rhea" id="RHEA:13493"/>
        <dbReference type="ChEBI" id="CHEBI:15378"/>
        <dbReference type="ChEBI" id="CHEBI:49256"/>
        <dbReference type="ChEBI" id="CHEBI:49258"/>
        <dbReference type="ChEBI" id="CHEBI:57783"/>
        <dbReference type="ChEBI" id="CHEBI:58349"/>
        <dbReference type="EC" id="1.1.1.86"/>
    </reaction>
</comment>
<comment type="cofactor">
    <cofactor evidence="1">
        <name>Mg(2+)</name>
        <dbReference type="ChEBI" id="CHEBI:18420"/>
    </cofactor>
    <text evidence="1">Binds 2 magnesium ions per subunit.</text>
</comment>
<comment type="pathway">
    <text evidence="1">Amino-acid biosynthesis; L-isoleucine biosynthesis; L-isoleucine from 2-oxobutanoate: step 2/4.</text>
</comment>
<comment type="pathway">
    <text evidence="1">Amino-acid biosynthesis; L-valine biosynthesis; L-valine from pyruvate: step 2/4.</text>
</comment>
<comment type="similarity">
    <text evidence="1">Belongs to the ketol-acid reductoisomerase family.</text>
</comment>
<dbReference type="EC" id="1.1.1.86" evidence="1"/>
<dbReference type="EMBL" id="CP000477">
    <property type="protein sequence ID" value="ABK13914.1"/>
    <property type="molecule type" value="Genomic_DNA"/>
</dbReference>
<dbReference type="RefSeq" id="WP_011695313.1">
    <property type="nucleotide sequence ID" value="NC_008553.1"/>
</dbReference>
<dbReference type="SMR" id="A0B5E0"/>
<dbReference type="STRING" id="349307.Mthe_0112"/>
<dbReference type="GeneID" id="4462287"/>
<dbReference type="KEGG" id="mtp:Mthe_0112"/>
<dbReference type="HOGENOM" id="CLU_033821_0_1_2"/>
<dbReference type="OrthoDB" id="6064at2157"/>
<dbReference type="UniPathway" id="UPA00047">
    <property type="reaction ID" value="UER00056"/>
</dbReference>
<dbReference type="UniPathway" id="UPA00049">
    <property type="reaction ID" value="UER00060"/>
</dbReference>
<dbReference type="Proteomes" id="UP000000674">
    <property type="component" value="Chromosome"/>
</dbReference>
<dbReference type="GO" id="GO:0004455">
    <property type="term" value="F:ketol-acid reductoisomerase activity"/>
    <property type="evidence" value="ECO:0007669"/>
    <property type="project" value="UniProtKB-UniRule"/>
</dbReference>
<dbReference type="GO" id="GO:0000287">
    <property type="term" value="F:magnesium ion binding"/>
    <property type="evidence" value="ECO:0007669"/>
    <property type="project" value="UniProtKB-UniRule"/>
</dbReference>
<dbReference type="GO" id="GO:0050661">
    <property type="term" value="F:NADP binding"/>
    <property type="evidence" value="ECO:0007669"/>
    <property type="project" value="InterPro"/>
</dbReference>
<dbReference type="GO" id="GO:0009097">
    <property type="term" value="P:isoleucine biosynthetic process"/>
    <property type="evidence" value="ECO:0007669"/>
    <property type="project" value="UniProtKB-UniRule"/>
</dbReference>
<dbReference type="GO" id="GO:0009099">
    <property type="term" value="P:L-valine biosynthetic process"/>
    <property type="evidence" value="ECO:0007669"/>
    <property type="project" value="UniProtKB-UniRule"/>
</dbReference>
<dbReference type="FunFam" id="3.40.50.720:FF:000023">
    <property type="entry name" value="Ketol-acid reductoisomerase (NADP(+))"/>
    <property type="match status" value="1"/>
</dbReference>
<dbReference type="Gene3D" id="6.10.240.10">
    <property type="match status" value="1"/>
</dbReference>
<dbReference type="Gene3D" id="3.40.50.720">
    <property type="entry name" value="NAD(P)-binding Rossmann-like Domain"/>
    <property type="match status" value="1"/>
</dbReference>
<dbReference type="HAMAP" id="MF_00435">
    <property type="entry name" value="IlvC"/>
    <property type="match status" value="1"/>
</dbReference>
<dbReference type="InterPro" id="IPR008927">
    <property type="entry name" value="6-PGluconate_DH-like_C_sf"/>
</dbReference>
<dbReference type="InterPro" id="IPR013023">
    <property type="entry name" value="KARI"/>
</dbReference>
<dbReference type="InterPro" id="IPR000506">
    <property type="entry name" value="KARI_C"/>
</dbReference>
<dbReference type="InterPro" id="IPR013116">
    <property type="entry name" value="KARI_N"/>
</dbReference>
<dbReference type="InterPro" id="IPR014359">
    <property type="entry name" value="KARI_prok"/>
</dbReference>
<dbReference type="InterPro" id="IPR036291">
    <property type="entry name" value="NAD(P)-bd_dom_sf"/>
</dbReference>
<dbReference type="NCBIfam" id="TIGR00465">
    <property type="entry name" value="ilvC"/>
    <property type="match status" value="1"/>
</dbReference>
<dbReference type="NCBIfam" id="NF004017">
    <property type="entry name" value="PRK05479.1"/>
    <property type="match status" value="1"/>
</dbReference>
<dbReference type="NCBIfam" id="NF009940">
    <property type="entry name" value="PRK13403.1"/>
    <property type="match status" value="1"/>
</dbReference>
<dbReference type="PANTHER" id="PTHR21371">
    <property type="entry name" value="KETOL-ACID REDUCTOISOMERASE, MITOCHONDRIAL"/>
    <property type="match status" value="1"/>
</dbReference>
<dbReference type="PANTHER" id="PTHR21371:SF1">
    <property type="entry name" value="KETOL-ACID REDUCTOISOMERASE, MITOCHONDRIAL"/>
    <property type="match status" value="1"/>
</dbReference>
<dbReference type="Pfam" id="PF01450">
    <property type="entry name" value="KARI_C"/>
    <property type="match status" value="1"/>
</dbReference>
<dbReference type="Pfam" id="PF07991">
    <property type="entry name" value="KARI_N"/>
    <property type="match status" value="1"/>
</dbReference>
<dbReference type="PIRSF" id="PIRSF000116">
    <property type="entry name" value="IlvC_gammaproteo"/>
    <property type="match status" value="1"/>
</dbReference>
<dbReference type="SUPFAM" id="SSF48179">
    <property type="entry name" value="6-phosphogluconate dehydrogenase C-terminal domain-like"/>
    <property type="match status" value="1"/>
</dbReference>
<dbReference type="SUPFAM" id="SSF51735">
    <property type="entry name" value="NAD(P)-binding Rossmann-fold domains"/>
    <property type="match status" value="1"/>
</dbReference>
<dbReference type="PROSITE" id="PS51851">
    <property type="entry name" value="KARI_C"/>
    <property type="match status" value="1"/>
</dbReference>
<dbReference type="PROSITE" id="PS51850">
    <property type="entry name" value="KARI_N"/>
    <property type="match status" value="1"/>
</dbReference>
<organism>
    <name type="scientific">Methanothrix thermoacetophila (strain DSM 6194 / JCM 14653 / NBRC 101360 / PT)</name>
    <name type="common">Methanosaeta thermophila</name>
    <dbReference type="NCBI Taxonomy" id="349307"/>
    <lineage>
        <taxon>Archaea</taxon>
        <taxon>Methanobacteriati</taxon>
        <taxon>Methanobacteriota</taxon>
        <taxon>Stenosarchaea group</taxon>
        <taxon>Methanomicrobia</taxon>
        <taxon>Methanotrichales</taxon>
        <taxon>Methanotrichaceae</taxon>
        <taxon>Methanothrix</taxon>
    </lineage>
</organism>
<evidence type="ECO:0000255" key="1">
    <source>
        <dbReference type="HAMAP-Rule" id="MF_00435"/>
    </source>
</evidence>
<evidence type="ECO:0000255" key="2">
    <source>
        <dbReference type="PROSITE-ProRule" id="PRU01197"/>
    </source>
</evidence>
<evidence type="ECO:0000255" key="3">
    <source>
        <dbReference type="PROSITE-ProRule" id="PRU01198"/>
    </source>
</evidence>
<reference key="1">
    <citation type="submission" date="2006-10" db="EMBL/GenBank/DDBJ databases">
        <title>Complete sequence of Methanosaeta thermophila PT.</title>
        <authorList>
            <consortium name="US DOE Joint Genome Institute"/>
            <person name="Copeland A."/>
            <person name="Lucas S."/>
            <person name="Lapidus A."/>
            <person name="Barry K."/>
            <person name="Detter J.C."/>
            <person name="Glavina del Rio T."/>
            <person name="Hammon N."/>
            <person name="Israni S."/>
            <person name="Pitluck S."/>
            <person name="Chain P."/>
            <person name="Malfatti S."/>
            <person name="Shin M."/>
            <person name="Vergez L."/>
            <person name="Schmutz J."/>
            <person name="Larimer F."/>
            <person name="Land M."/>
            <person name="Hauser L."/>
            <person name="Kyrpides N."/>
            <person name="Kim E."/>
            <person name="Smith K.S."/>
            <person name="Ingram-Smith C."/>
            <person name="Richardson P."/>
        </authorList>
    </citation>
    <scope>NUCLEOTIDE SEQUENCE [LARGE SCALE GENOMIC DNA]</scope>
    <source>
        <strain>DSM 6194 / JCM 14653 / NBRC 101360 / PT</strain>
    </source>
</reference>
<proteinExistence type="inferred from homology"/>
<feature type="chain" id="PRO_1000050535" description="Ketol-acid reductoisomerase (NADP(+))">
    <location>
        <begin position="1"/>
        <end position="332"/>
    </location>
</feature>
<feature type="domain" description="KARI N-terminal Rossmann" evidence="2">
    <location>
        <begin position="1"/>
        <end position="182"/>
    </location>
</feature>
<feature type="domain" description="KARI C-terminal knotted" evidence="3">
    <location>
        <begin position="183"/>
        <end position="328"/>
    </location>
</feature>
<feature type="active site" evidence="1">
    <location>
        <position position="108"/>
    </location>
</feature>
<feature type="binding site" evidence="1">
    <location>
        <begin position="25"/>
        <end position="28"/>
    </location>
    <ligand>
        <name>NADP(+)</name>
        <dbReference type="ChEBI" id="CHEBI:58349"/>
    </ligand>
</feature>
<feature type="binding site" evidence="1">
    <location>
        <position position="49"/>
    </location>
    <ligand>
        <name>NADP(+)</name>
        <dbReference type="ChEBI" id="CHEBI:58349"/>
    </ligand>
</feature>
<feature type="binding site" evidence="1">
    <location>
        <position position="51"/>
    </location>
    <ligand>
        <name>NADP(+)</name>
        <dbReference type="ChEBI" id="CHEBI:58349"/>
    </ligand>
</feature>
<feature type="binding site" evidence="1">
    <location>
        <begin position="83"/>
        <end position="86"/>
    </location>
    <ligand>
        <name>NADP(+)</name>
        <dbReference type="ChEBI" id="CHEBI:58349"/>
    </ligand>
</feature>
<feature type="binding site" evidence="1">
    <location>
        <position position="134"/>
    </location>
    <ligand>
        <name>NADP(+)</name>
        <dbReference type="ChEBI" id="CHEBI:58349"/>
    </ligand>
</feature>
<feature type="binding site" evidence="1">
    <location>
        <position position="191"/>
    </location>
    <ligand>
        <name>Mg(2+)</name>
        <dbReference type="ChEBI" id="CHEBI:18420"/>
        <label>1</label>
    </ligand>
</feature>
<feature type="binding site" evidence="1">
    <location>
        <position position="191"/>
    </location>
    <ligand>
        <name>Mg(2+)</name>
        <dbReference type="ChEBI" id="CHEBI:18420"/>
        <label>2</label>
    </ligand>
</feature>
<feature type="binding site" evidence="1">
    <location>
        <position position="195"/>
    </location>
    <ligand>
        <name>Mg(2+)</name>
        <dbReference type="ChEBI" id="CHEBI:18420"/>
        <label>1</label>
    </ligand>
</feature>
<feature type="binding site" evidence="1">
    <location>
        <position position="227"/>
    </location>
    <ligand>
        <name>Mg(2+)</name>
        <dbReference type="ChEBI" id="CHEBI:18420"/>
        <label>2</label>
    </ligand>
</feature>
<feature type="binding site" evidence="1">
    <location>
        <position position="231"/>
    </location>
    <ligand>
        <name>Mg(2+)</name>
        <dbReference type="ChEBI" id="CHEBI:18420"/>
        <label>2</label>
    </ligand>
</feature>
<feature type="binding site" evidence="1">
    <location>
        <position position="252"/>
    </location>
    <ligand>
        <name>substrate</name>
    </ligand>
</feature>
<keyword id="KW-0028">Amino-acid biosynthesis</keyword>
<keyword id="KW-0100">Branched-chain amino acid biosynthesis</keyword>
<keyword id="KW-0460">Magnesium</keyword>
<keyword id="KW-0479">Metal-binding</keyword>
<keyword id="KW-0521">NADP</keyword>
<keyword id="KW-0560">Oxidoreductase</keyword>
<keyword id="KW-1185">Reference proteome</keyword>
<name>ILVC_METTP</name>
<protein>
    <recommendedName>
        <fullName evidence="1">Ketol-acid reductoisomerase (NADP(+))</fullName>
        <shortName evidence="1">KARI</shortName>
        <ecNumber evidence="1">1.1.1.86</ecNumber>
    </recommendedName>
    <alternativeName>
        <fullName evidence="1">Acetohydroxy-acid isomeroreductase</fullName>
        <shortName evidence="1">AHIR</shortName>
    </alternativeName>
    <alternativeName>
        <fullName evidence="1">Alpha-keto-beta-hydroxylacyl reductoisomerase</fullName>
    </alternativeName>
    <alternativeName>
        <fullName evidence="1">Ketol-acid reductoisomerase type 1</fullName>
    </alternativeName>
    <alternativeName>
        <fullName evidence="1">Ketol-acid reductoisomerase type I</fullName>
    </alternativeName>
</protein>
<accession>A0B5E0</accession>
<sequence length="332" mass="36869">MATIYRDKDADLRVLKDKTIAIIGYGNQGHAQGANLKDSGLDVIAADLKDSPAWKRAEKDGLRVMTVPEASKEADFIQILLPDELQPRIYREQIAPYLEEGNILGFSHGFNIHFNQIIPPEYVDVVMVAPKGPGDLVRRQFLEGKGVPCLVAVKQDYSKSAKRIALAYAKGIGGTRAGVLETTFAEETETDLFGEQVDLCGGVTAMIKAAFETMVQAGYQPEIAYFEACHELKLITDLIHEGGLMKMWNSVSNTAEYGGLTRGDRIINEQSREAMWEILEEIQSGKFAREWILESQAGLPVKKALEQQESEHLIEKVGAELRAMMPWLGEKK</sequence>
<gene>
    <name evidence="1" type="primary">ilvC</name>
    <name type="ordered locus">Mthe_0112</name>
</gene>